<comment type="function">
    <text evidence="1">Hydrolyzes ribosome-free peptidyl-tRNAs (with 1 or more amino acids incorporated), which drop off the ribosome during protein synthesis, or as a result of ribosome stalling.</text>
</comment>
<comment type="function">
    <text evidence="1">Catalyzes the release of premature peptidyl moieties from peptidyl-tRNA molecules trapped in stalled 50S ribosomal subunits, and thus maintains levels of free tRNAs and 50S ribosomes.</text>
</comment>
<comment type="catalytic activity">
    <reaction evidence="1">
        <text>an N-acyl-L-alpha-aminoacyl-tRNA + H2O = an N-acyl-L-amino acid + a tRNA + H(+)</text>
        <dbReference type="Rhea" id="RHEA:54448"/>
        <dbReference type="Rhea" id="RHEA-COMP:10123"/>
        <dbReference type="Rhea" id="RHEA-COMP:13883"/>
        <dbReference type="ChEBI" id="CHEBI:15377"/>
        <dbReference type="ChEBI" id="CHEBI:15378"/>
        <dbReference type="ChEBI" id="CHEBI:59874"/>
        <dbReference type="ChEBI" id="CHEBI:78442"/>
        <dbReference type="ChEBI" id="CHEBI:138191"/>
        <dbReference type="EC" id="3.1.1.29"/>
    </reaction>
</comment>
<comment type="subunit">
    <text evidence="1">Monomer.</text>
</comment>
<comment type="subcellular location">
    <subcellularLocation>
        <location evidence="1">Cytoplasm</location>
    </subcellularLocation>
</comment>
<comment type="similarity">
    <text evidence="1">Belongs to the PTH family.</text>
</comment>
<accession>A7ZZE0</accession>
<sequence length="194" mass="21082">MTIKLIVGLANPGAEYAATRHNAGAWFVDLLAERLRAPLREEAKFFGYTSRVTLGGEDVRLLVPTTFMNLSGKAVAAMASFFRINPDEILVAHDELDLPPGVAKFKLGGGHGGHNGLKDIISKLGNNPNFHRLRIGIGHPGDKNKVVGFVLGKPPVSEQKLIDEAIDEAARCTEMWFTDGLTKATNRLHAFKAQ</sequence>
<name>PTH_ECOHS</name>
<reference key="1">
    <citation type="journal article" date="2008" name="J. Bacteriol.">
        <title>The pangenome structure of Escherichia coli: comparative genomic analysis of E. coli commensal and pathogenic isolates.</title>
        <authorList>
            <person name="Rasko D.A."/>
            <person name="Rosovitz M.J."/>
            <person name="Myers G.S.A."/>
            <person name="Mongodin E.F."/>
            <person name="Fricke W.F."/>
            <person name="Gajer P."/>
            <person name="Crabtree J."/>
            <person name="Sebaihia M."/>
            <person name="Thomson N.R."/>
            <person name="Chaudhuri R."/>
            <person name="Henderson I.R."/>
            <person name="Sperandio V."/>
            <person name="Ravel J."/>
        </authorList>
    </citation>
    <scope>NUCLEOTIDE SEQUENCE [LARGE SCALE GENOMIC DNA]</scope>
    <source>
        <strain>HS</strain>
    </source>
</reference>
<feature type="chain" id="PRO_1000057550" description="Peptidyl-tRNA hydrolase">
    <location>
        <begin position="1"/>
        <end position="194"/>
    </location>
</feature>
<feature type="active site" description="Proton acceptor" evidence="1">
    <location>
        <position position="21"/>
    </location>
</feature>
<feature type="binding site" evidence="1">
    <location>
        <position position="16"/>
    </location>
    <ligand>
        <name>tRNA</name>
        <dbReference type="ChEBI" id="CHEBI:17843"/>
    </ligand>
</feature>
<feature type="binding site" evidence="1">
    <location>
        <position position="67"/>
    </location>
    <ligand>
        <name>tRNA</name>
        <dbReference type="ChEBI" id="CHEBI:17843"/>
    </ligand>
</feature>
<feature type="binding site" evidence="1">
    <location>
        <position position="69"/>
    </location>
    <ligand>
        <name>tRNA</name>
        <dbReference type="ChEBI" id="CHEBI:17843"/>
    </ligand>
</feature>
<feature type="binding site" evidence="1">
    <location>
        <position position="115"/>
    </location>
    <ligand>
        <name>tRNA</name>
        <dbReference type="ChEBI" id="CHEBI:17843"/>
    </ligand>
</feature>
<feature type="site" description="Discriminates between blocked and unblocked aminoacyl-tRNA" evidence="1">
    <location>
        <position position="11"/>
    </location>
</feature>
<feature type="site" description="Stabilizes the basic form of H active site to accept a proton" evidence="1">
    <location>
        <position position="94"/>
    </location>
</feature>
<proteinExistence type="inferred from homology"/>
<gene>
    <name evidence="1" type="primary">pth</name>
    <name type="ordered locus">EcHS_A1309</name>
</gene>
<keyword id="KW-0963">Cytoplasm</keyword>
<keyword id="KW-0378">Hydrolase</keyword>
<keyword id="KW-0694">RNA-binding</keyword>
<keyword id="KW-0820">tRNA-binding</keyword>
<protein>
    <recommendedName>
        <fullName evidence="1">Peptidyl-tRNA hydrolase</fullName>
        <shortName evidence="1">Pth</shortName>
        <ecNumber evidence="1">3.1.1.29</ecNumber>
    </recommendedName>
</protein>
<dbReference type="EC" id="3.1.1.29" evidence="1"/>
<dbReference type="EMBL" id="CP000802">
    <property type="protein sequence ID" value="ABV05644.1"/>
    <property type="molecule type" value="Genomic_DNA"/>
</dbReference>
<dbReference type="RefSeq" id="WP_000152933.1">
    <property type="nucleotide sequence ID" value="NC_009800.1"/>
</dbReference>
<dbReference type="BMRB" id="A7ZZE0"/>
<dbReference type="SMR" id="A7ZZE0"/>
<dbReference type="GeneID" id="93775269"/>
<dbReference type="KEGG" id="ecx:EcHS_A1309"/>
<dbReference type="HOGENOM" id="CLU_062456_3_1_6"/>
<dbReference type="GO" id="GO:0005737">
    <property type="term" value="C:cytoplasm"/>
    <property type="evidence" value="ECO:0007669"/>
    <property type="project" value="UniProtKB-SubCell"/>
</dbReference>
<dbReference type="GO" id="GO:0004045">
    <property type="term" value="F:peptidyl-tRNA hydrolase activity"/>
    <property type="evidence" value="ECO:0007669"/>
    <property type="project" value="UniProtKB-UniRule"/>
</dbReference>
<dbReference type="GO" id="GO:0000049">
    <property type="term" value="F:tRNA binding"/>
    <property type="evidence" value="ECO:0007669"/>
    <property type="project" value="UniProtKB-UniRule"/>
</dbReference>
<dbReference type="GO" id="GO:0006515">
    <property type="term" value="P:protein quality control for misfolded or incompletely synthesized proteins"/>
    <property type="evidence" value="ECO:0007669"/>
    <property type="project" value="UniProtKB-UniRule"/>
</dbReference>
<dbReference type="GO" id="GO:0072344">
    <property type="term" value="P:rescue of stalled ribosome"/>
    <property type="evidence" value="ECO:0007669"/>
    <property type="project" value="UniProtKB-UniRule"/>
</dbReference>
<dbReference type="CDD" id="cd00462">
    <property type="entry name" value="PTH"/>
    <property type="match status" value="1"/>
</dbReference>
<dbReference type="FunFam" id="3.40.50.1470:FF:000001">
    <property type="entry name" value="Peptidyl-tRNA hydrolase"/>
    <property type="match status" value="1"/>
</dbReference>
<dbReference type="Gene3D" id="3.40.50.1470">
    <property type="entry name" value="Peptidyl-tRNA hydrolase"/>
    <property type="match status" value="1"/>
</dbReference>
<dbReference type="HAMAP" id="MF_00083">
    <property type="entry name" value="Pept_tRNA_hydro_bact"/>
    <property type="match status" value="1"/>
</dbReference>
<dbReference type="InterPro" id="IPR001328">
    <property type="entry name" value="Pept_tRNA_hydro"/>
</dbReference>
<dbReference type="InterPro" id="IPR018171">
    <property type="entry name" value="Pept_tRNA_hydro_CS"/>
</dbReference>
<dbReference type="InterPro" id="IPR036416">
    <property type="entry name" value="Pept_tRNA_hydro_sf"/>
</dbReference>
<dbReference type="NCBIfam" id="TIGR00447">
    <property type="entry name" value="pth"/>
    <property type="match status" value="1"/>
</dbReference>
<dbReference type="PANTHER" id="PTHR17224">
    <property type="entry name" value="PEPTIDYL-TRNA HYDROLASE"/>
    <property type="match status" value="1"/>
</dbReference>
<dbReference type="PANTHER" id="PTHR17224:SF1">
    <property type="entry name" value="PEPTIDYL-TRNA HYDROLASE"/>
    <property type="match status" value="1"/>
</dbReference>
<dbReference type="Pfam" id="PF01195">
    <property type="entry name" value="Pept_tRNA_hydro"/>
    <property type="match status" value="1"/>
</dbReference>
<dbReference type="SUPFAM" id="SSF53178">
    <property type="entry name" value="Peptidyl-tRNA hydrolase-like"/>
    <property type="match status" value="1"/>
</dbReference>
<dbReference type="PROSITE" id="PS01195">
    <property type="entry name" value="PEPT_TRNA_HYDROL_1"/>
    <property type="match status" value="1"/>
</dbReference>
<dbReference type="PROSITE" id="PS01196">
    <property type="entry name" value="PEPT_TRNA_HYDROL_2"/>
    <property type="match status" value="1"/>
</dbReference>
<organism>
    <name type="scientific">Escherichia coli O9:H4 (strain HS)</name>
    <dbReference type="NCBI Taxonomy" id="331112"/>
    <lineage>
        <taxon>Bacteria</taxon>
        <taxon>Pseudomonadati</taxon>
        <taxon>Pseudomonadota</taxon>
        <taxon>Gammaproteobacteria</taxon>
        <taxon>Enterobacterales</taxon>
        <taxon>Enterobacteriaceae</taxon>
        <taxon>Escherichia</taxon>
    </lineage>
</organism>
<evidence type="ECO:0000255" key="1">
    <source>
        <dbReference type="HAMAP-Rule" id="MF_00083"/>
    </source>
</evidence>